<name>SPB1_SCHPO</name>
<organism>
    <name type="scientific">Schizosaccharomyces pombe (strain 972 / ATCC 24843)</name>
    <name type="common">Fission yeast</name>
    <dbReference type="NCBI Taxonomy" id="284812"/>
    <lineage>
        <taxon>Eukaryota</taxon>
        <taxon>Fungi</taxon>
        <taxon>Dikarya</taxon>
        <taxon>Ascomycota</taxon>
        <taxon>Taphrinomycotina</taxon>
        <taxon>Schizosaccharomycetes</taxon>
        <taxon>Schizosaccharomycetales</taxon>
        <taxon>Schizosaccharomycetaceae</taxon>
        <taxon>Schizosaccharomyces</taxon>
    </lineage>
</organism>
<evidence type="ECO:0000255" key="1">
    <source>
        <dbReference type="HAMAP-Rule" id="MF_03163"/>
    </source>
</evidence>
<evidence type="ECO:0000256" key="2">
    <source>
        <dbReference type="SAM" id="MobiDB-lite"/>
    </source>
</evidence>
<evidence type="ECO:0000269" key="3">
    <source>
    </source>
</evidence>
<evidence type="ECO:0000305" key="4"/>
<evidence type="ECO:0007829" key="5">
    <source>
        <dbReference type="PDB" id="8ETC"/>
    </source>
</evidence>
<comment type="function">
    <text evidence="1">Required for proper assembly of pre-ribosomal particles during the biogenesis of the 60S ribosomal subunit.</text>
</comment>
<comment type="catalytic activity">
    <reaction evidence="1">
        <text>a ribonucleotide in rRNA + S-adenosyl-L-methionine = a 2'-O-methylribonucleotide in rRNA + S-adenosyl-L-homocysteine + H(+)</text>
        <dbReference type="Rhea" id="RHEA:48628"/>
        <dbReference type="Rhea" id="RHEA-COMP:12164"/>
        <dbReference type="Rhea" id="RHEA-COMP:12165"/>
        <dbReference type="ChEBI" id="CHEBI:15378"/>
        <dbReference type="ChEBI" id="CHEBI:57856"/>
        <dbReference type="ChEBI" id="CHEBI:59789"/>
        <dbReference type="ChEBI" id="CHEBI:90675"/>
        <dbReference type="ChEBI" id="CHEBI:90676"/>
    </reaction>
</comment>
<comment type="subunit">
    <text evidence="1">Component of the nucleolar and nucleoplasmic pre-60S ribosomal particle.</text>
</comment>
<comment type="subcellular location">
    <subcellularLocation>
        <location evidence="1">Nucleus</location>
        <location evidence="1">Nucleolus</location>
    </subcellularLocation>
</comment>
<comment type="similarity">
    <text evidence="1">Belongs to the class I-like SAM-binding methyltransferase superfamily. RNA methyltransferase RlmE family. SPB1 subfamily.</text>
</comment>
<comment type="sequence caution" evidence="4">
    <conflict type="erroneous gene model prediction">
        <sequence resource="EMBL-CDS" id="CAA11034"/>
    </conflict>
</comment>
<dbReference type="EC" id="2.1.1.-" evidence="1"/>
<dbReference type="EMBL" id="CU329670">
    <property type="protein sequence ID" value="CAA22605.1"/>
    <property type="molecule type" value="Genomic_DNA"/>
</dbReference>
<dbReference type="EMBL" id="AJ223010">
    <property type="protein sequence ID" value="CAA11034.1"/>
    <property type="status" value="ALT_SEQ"/>
    <property type="molecule type" value="Genomic_DNA"/>
</dbReference>
<dbReference type="PIR" id="T37754">
    <property type="entry name" value="T37754"/>
</dbReference>
<dbReference type="PIR" id="T52474">
    <property type="entry name" value="T52474"/>
</dbReference>
<dbReference type="RefSeq" id="NP_593129.1">
    <property type="nucleotide sequence ID" value="NM_001018525.2"/>
</dbReference>
<dbReference type="PDB" id="8ESQ">
    <property type="method" value="EM"/>
    <property type="resolution" value="2.80 A"/>
    <property type="chains" value="w=1-802"/>
</dbReference>
<dbReference type="PDB" id="8ESR">
    <property type="method" value="EM"/>
    <property type="resolution" value="3.20 A"/>
    <property type="chains" value="w=1-802"/>
</dbReference>
<dbReference type="PDB" id="8ETC">
    <property type="method" value="EM"/>
    <property type="resolution" value="3.10 A"/>
    <property type="chains" value="w=1-802"/>
</dbReference>
<dbReference type="PDB" id="8ETJ">
    <property type="method" value="EM"/>
    <property type="resolution" value="3.20 A"/>
    <property type="chains" value="w=1-802"/>
</dbReference>
<dbReference type="PDBsum" id="8ESQ"/>
<dbReference type="PDBsum" id="8ESR"/>
<dbReference type="PDBsum" id="8ETC"/>
<dbReference type="PDBsum" id="8ETJ"/>
<dbReference type="SMR" id="O42832"/>
<dbReference type="BioGRID" id="278588">
    <property type="interactions" value="6"/>
</dbReference>
<dbReference type="FunCoup" id="O42832">
    <property type="interactions" value="694"/>
</dbReference>
<dbReference type="STRING" id="284812.O42832"/>
<dbReference type="iPTMnet" id="O42832"/>
<dbReference type="PaxDb" id="4896-SPAC1687.11.1"/>
<dbReference type="EnsemblFungi" id="SPAC1687.11.1">
    <property type="protein sequence ID" value="SPAC1687.11.1:pep"/>
    <property type="gene ID" value="SPAC1687.11"/>
</dbReference>
<dbReference type="GeneID" id="2542112"/>
<dbReference type="KEGG" id="spo:2542112"/>
<dbReference type="PomBase" id="SPAC1687.11">
    <property type="gene designation" value="spb1"/>
</dbReference>
<dbReference type="VEuPathDB" id="FungiDB:SPAC1687.11"/>
<dbReference type="eggNOG" id="KOG1098">
    <property type="taxonomic scope" value="Eukaryota"/>
</dbReference>
<dbReference type="HOGENOM" id="CLU_009422_8_1_1"/>
<dbReference type="InParanoid" id="O42832"/>
<dbReference type="OMA" id="QRKDKYY"/>
<dbReference type="PhylomeDB" id="O42832"/>
<dbReference type="PRO" id="PR:O42832"/>
<dbReference type="Proteomes" id="UP000002485">
    <property type="component" value="Chromosome I"/>
</dbReference>
<dbReference type="GO" id="GO:0005730">
    <property type="term" value="C:nucleolus"/>
    <property type="evidence" value="ECO:0000318"/>
    <property type="project" value="GO_Central"/>
</dbReference>
<dbReference type="GO" id="GO:0005634">
    <property type="term" value="C:nucleus"/>
    <property type="evidence" value="ECO:0007005"/>
    <property type="project" value="PomBase"/>
</dbReference>
<dbReference type="GO" id="GO:0030684">
    <property type="term" value="C:preribosome"/>
    <property type="evidence" value="ECO:0000314"/>
    <property type="project" value="PomBase"/>
</dbReference>
<dbReference type="GO" id="GO:0030687">
    <property type="term" value="C:preribosome, large subunit precursor"/>
    <property type="evidence" value="ECO:0000318"/>
    <property type="project" value="GO_Central"/>
</dbReference>
<dbReference type="GO" id="GO:0016435">
    <property type="term" value="F:rRNA (guanine) methyltransferase activity"/>
    <property type="evidence" value="ECO:0000318"/>
    <property type="project" value="GO_Central"/>
</dbReference>
<dbReference type="GO" id="GO:0070039">
    <property type="term" value="F:rRNA (guanosine-2'-O-)-methyltransferase activity"/>
    <property type="evidence" value="ECO:0007669"/>
    <property type="project" value="UniProtKB-UniRule"/>
</dbReference>
<dbReference type="GO" id="GO:0008650">
    <property type="term" value="F:rRNA (uridine-2'-O-)-methyltransferase activity"/>
    <property type="evidence" value="ECO:0000318"/>
    <property type="project" value="GO_Central"/>
</dbReference>
<dbReference type="GO" id="GO:1902626">
    <property type="term" value="P:assembly of large subunit precursor of preribosome"/>
    <property type="evidence" value="ECO:0000269"/>
    <property type="project" value="PomBase"/>
</dbReference>
<dbReference type="GO" id="GO:0000466">
    <property type="term" value="P:maturation of 5.8S rRNA from tricistronic rRNA transcript (SSU-rRNA, 5.8S rRNA, LSU-rRNA)"/>
    <property type="evidence" value="ECO:0000318"/>
    <property type="project" value="GO_Central"/>
</dbReference>
<dbReference type="GO" id="GO:0000463">
    <property type="term" value="P:maturation of LSU-rRNA from tricistronic rRNA transcript (SSU-rRNA, 5.8S rRNA, LSU-rRNA)"/>
    <property type="evidence" value="ECO:0000318"/>
    <property type="project" value="GO_Central"/>
</dbReference>
<dbReference type="GO" id="GO:0031167">
    <property type="term" value="P:rRNA methylation"/>
    <property type="evidence" value="ECO:0000318"/>
    <property type="project" value="GO_Central"/>
</dbReference>
<dbReference type="FunFam" id="3.40.50.150:FF:000004">
    <property type="entry name" value="AdoMet-dependent rRNA methyltransferase SPB1"/>
    <property type="match status" value="1"/>
</dbReference>
<dbReference type="Gene3D" id="3.40.50.150">
    <property type="entry name" value="Vaccinia Virus protein VP39"/>
    <property type="match status" value="1"/>
</dbReference>
<dbReference type="HAMAP" id="MF_01547">
    <property type="entry name" value="RNA_methyltr_E"/>
    <property type="match status" value="1"/>
</dbReference>
<dbReference type="HAMAP" id="MF_03163">
    <property type="entry name" value="RNA_methyltr_E_SPB1"/>
    <property type="match status" value="1"/>
</dbReference>
<dbReference type="InterPro" id="IPR050082">
    <property type="entry name" value="RNA_methyltr_RlmE"/>
</dbReference>
<dbReference type="InterPro" id="IPR002877">
    <property type="entry name" value="RNA_MeTrfase_FtsJ_dom"/>
</dbReference>
<dbReference type="InterPro" id="IPR015507">
    <property type="entry name" value="rRNA-MeTfrase_E"/>
</dbReference>
<dbReference type="InterPro" id="IPR012920">
    <property type="entry name" value="rRNA_MeTfrase_SPB1-like_C"/>
</dbReference>
<dbReference type="InterPro" id="IPR024576">
    <property type="entry name" value="rRNA_MeTfrase_Spb1_DUF3381"/>
</dbReference>
<dbReference type="InterPro" id="IPR029063">
    <property type="entry name" value="SAM-dependent_MTases_sf"/>
</dbReference>
<dbReference type="InterPro" id="IPR028589">
    <property type="entry name" value="SPB1-like"/>
</dbReference>
<dbReference type="PANTHER" id="PTHR10920:SF13">
    <property type="entry name" value="PRE-RRNA 2'-O-RIBOSE RNA METHYLTRANSFERASE FTSJ3"/>
    <property type="match status" value="1"/>
</dbReference>
<dbReference type="PANTHER" id="PTHR10920">
    <property type="entry name" value="RIBOSOMAL RNA METHYLTRANSFERASE"/>
    <property type="match status" value="1"/>
</dbReference>
<dbReference type="Pfam" id="PF11861">
    <property type="entry name" value="DUF3381"/>
    <property type="match status" value="1"/>
</dbReference>
<dbReference type="Pfam" id="PF01728">
    <property type="entry name" value="FtsJ"/>
    <property type="match status" value="1"/>
</dbReference>
<dbReference type="Pfam" id="PF07780">
    <property type="entry name" value="Spb1_C"/>
    <property type="match status" value="1"/>
</dbReference>
<dbReference type="SUPFAM" id="SSF53335">
    <property type="entry name" value="S-adenosyl-L-methionine-dependent methyltransferases"/>
    <property type="match status" value="1"/>
</dbReference>
<proteinExistence type="evidence at protein level"/>
<keyword id="KW-0002">3D-structure</keyword>
<keyword id="KW-0175">Coiled coil</keyword>
<keyword id="KW-0489">Methyltransferase</keyword>
<keyword id="KW-0539">Nucleus</keyword>
<keyword id="KW-0597">Phosphoprotein</keyword>
<keyword id="KW-1185">Reference proteome</keyword>
<keyword id="KW-0690">Ribosome biogenesis</keyword>
<keyword id="KW-0698">rRNA processing</keyword>
<keyword id="KW-0949">S-adenosyl-L-methionine</keyword>
<keyword id="KW-0808">Transferase</keyword>
<accession>O42832</accession>
<reference key="1">
    <citation type="journal article" date="2002" name="Nature">
        <title>The genome sequence of Schizosaccharomyces pombe.</title>
        <authorList>
            <person name="Wood V."/>
            <person name="Gwilliam R."/>
            <person name="Rajandream M.A."/>
            <person name="Lyne M.H."/>
            <person name="Lyne R."/>
            <person name="Stewart A."/>
            <person name="Sgouros J.G."/>
            <person name="Peat N."/>
            <person name="Hayles J."/>
            <person name="Baker S.G."/>
            <person name="Basham D."/>
            <person name="Bowman S."/>
            <person name="Brooks K."/>
            <person name="Brown D."/>
            <person name="Brown S."/>
            <person name="Chillingworth T."/>
            <person name="Churcher C.M."/>
            <person name="Collins M."/>
            <person name="Connor R."/>
            <person name="Cronin A."/>
            <person name="Davis P."/>
            <person name="Feltwell T."/>
            <person name="Fraser A."/>
            <person name="Gentles S."/>
            <person name="Goble A."/>
            <person name="Hamlin N."/>
            <person name="Harris D.E."/>
            <person name="Hidalgo J."/>
            <person name="Hodgson G."/>
            <person name="Holroyd S."/>
            <person name="Hornsby T."/>
            <person name="Howarth S."/>
            <person name="Huckle E.J."/>
            <person name="Hunt S."/>
            <person name="Jagels K."/>
            <person name="James K.D."/>
            <person name="Jones L."/>
            <person name="Jones M."/>
            <person name="Leather S."/>
            <person name="McDonald S."/>
            <person name="McLean J."/>
            <person name="Mooney P."/>
            <person name="Moule S."/>
            <person name="Mungall K.L."/>
            <person name="Murphy L.D."/>
            <person name="Niblett D."/>
            <person name="Odell C."/>
            <person name="Oliver K."/>
            <person name="O'Neil S."/>
            <person name="Pearson D."/>
            <person name="Quail M.A."/>
            <person name="Rabbinowitsch E."/>
            <person name="Rutherford K.M."/>
            <person name="Rutter S."/>
            <person name="Saunders D."/>
            <person name="Seeger K."/>
            <person name="Sharp S."/>
            <person name="Skelton J."/>
            <person name="Simmonds M.N."/>
            <person name="Squares R."/>
            <person name="Squares S."/>
            <person name="Stevens K."/>
            <person name="Taylor K."/>
            <person name="Taylor R.G."/>
            <person name="Tivey A."/>
            <person name="Walsh S.V."/>
            <person name="Warren T."/>
            <person name="Whitehead S."/>
            <person name="Woodward J.R."/>
            <person name="Volckaert G."/>
            <person name="Aert R."/>
            <person name="Robben J."/>
            <person name="Grymonprez B."/>
            <person name="Weltjens I."/>
            <person name="Vanstreels E."/>
            <person name="Rieger M."/>
            <person name="Schaefer M."/>
            <person name="Mueller-Auer S."/>
            <person name="Gabel C."/>
            <person name="Fuchs M."/>
            <person name="Duesterhoeft A."/>
            <person name="Fritzc C."/>
            <person name="Holzer E."/>
            <person name="Moestl D."/>
            <person name="Hilbert H."/>
            <person name="Borzym K."/>
            <person name="Langer I."/>
            <person name="Beck A."/>
            <person name="Lehrach H."/>
            <person name="Reinhardt R."/>
            <person name="Pohl T.M."/>
            <person name="Eger P."/>
            <person name="Zimmermann W."/>
            <person name="Wedler H."/>
            <person name="Wambutt R."/>
            <person name="Purnelle B."/>
            <person name="Goffeau A."/>
            <person name="Cadieu E."/>
            <person name="Dreano S."/>
            <person name="Gloux S."/>
            <person name="Lelaure V."/>
            <person name="Mottier S."/>
            <person name="Galibert F."/>
            <person name="Aves S.J."/>
            <person name="Xiang Z."/>
            <person name="Hunt C."/>
            <person name="Moore K."/>
            <person name="Hurst S.M."/>
            <person name="Lucas M."/>
            <person name="Rochet M."/>
            <person name="Gaillardin C."/>
            <person name="Tallada V.A."/>
            <person name="Garzon A."/>
            <person name="Thode G."/>
            <person name="Daga R.R."/>
            <person name="Cruzado L."/>
            <person name="Jimenez J."/>
            <person name="Sanchez M."/>
            <person name="del Rey F."/>
            <person name="Benito J."/>
            <person name="Dominguez A."/>
            <person name="Revuelta J.L."/>
            <person name="Moreno S."/>
            <person name="Armstrong J."/>
            <person name="Forsburg S.L."/>
            <person name="Cerutti L."/>
            <person name="Lowe T."/>
            <person name="McCombie W.R."/>
            <person name="Paulsen I."/>
            <person name="Potashkin J."/>
            <person name="Shpakovski G.V."/>
            <person name="Ussery D."/>
            <person name="Barrell B.G."/>
            <person name="Nurse P."/>
        </authorList>
    </citation>
    <scope>NUCLEOTIDE SEQUENCE [LARGE SCALE GENOMIC DNA]</scope>
    <source>
        <strain>972 / ATCC 24843</strain>
    </source>
</reference>
<reference key="2">
    <citation type="journal article" date="2000" name="Yeast">
        <title>Gene sam1 encoding adenosylmethionine synthetase: effects of its expression in the fission yeast Schizosaccharomyces pombe.</title>
        <authorList>
            <person name="Hilti N."/>
            <person name="Graeub R."/>
            <person name="Joerg M."/>
            <person name="Arnold P."/>
            <person name="Schweingruber A.-M."/>
            <person name="Schweingruber M.E."/>
        </authorList>
    </citation>
    <scope>NUCLEOTIDE SEQUENCE [GENOMIC DNA] OF 23-802</scope>
</reference>
<reference key="3">
    <citation type="journal article" date="2008" name="J. Proteome Res.">
        <title>Phosphoproteome analysis of fission yeast.</title>
        <authorList>
            <person name="Wilson-Grady J.T."/>
            <person name="Villen J."/>
            <person name="Gygi S.P."/>
        </authorList>
    </citation>
    <scope>PHOSPHORYLATION [LARGE SCALE ANALYSIS] AT SER-362</scope>
    <scope>IDENTIFICATION BY MASS SPECTROMETRY</scope>
</reference>
<feature type="chain" id="PRO_0000155601" description="AdoMet-dependent rRNA methyltransferase spb1">
    <location>
        <begin position="1"/>
        <end position="802"/>
    </location>
</feature>
<feature type="region of interest" description="Disordered" evidence="2">
    <location>
        <begin position="423"/>
        <end position="451"/>
    </location>
</feature>
<feature type="region of interest" description="Disordered" evidence="2">
    <location>
        <begin position="487"/>
        <end position="513"/>
    </location>
</feature>
<feature type="region of interest" description="Disordered" evidence="2">
    <location>
        <begin position="569"/>
        <end position="591"/>
    </location>
</feature>
<feature type="region of interest" description="Disordered" evidence="2">
    <location>
        <begin position="718"/>
        <end position="802"/>
    </location>
</feature>
<feature type="coiled-coil region" evidence="1">
    <location>
        <begin position="347"/>
        <end position="389"/>
    </location>
</feature>
<feature type="compositionally biased region" description="Acidic residues" evidence="2">
    <location>
        <begin position="433"/>
        <end position="450"/>
    </location>
</feature>
<feature type="compositionally biased region" description="Acidic residues" evidence="2">
    <location>
        <begin position="487"/>
        <end position="504"/>
    </location>
</feature>
<feature type="compositionally biased region" description="Basic and acidic residues" evidence="2">
    <location>
        <begin position="579"/>
        <end position="591"/>
    </location>
</feature>
<feature type="compositionally biased region" description="Basic residues" evidence="2">
    <location>
        <begin position="768"/>
        <end position="779"/>
    </location>
</feature>
<feature type="compositionally biased region" description="Basic and acidic residues" evidence="2">
    <location>
        <begin position="780"/>
        <end position="792"/>
    </location>
</feature>
<feature type="compositionally biased region" description="Basic residues" evidence="2">
    <location>
        <begin position="793"/>
        <end position="802"/>
    </location>
</feature>
<feature type="active site" description="Proton acceptor" evidence="1">
    <location>
        <position position="158"/>
    </location>
</feature>
<feature type="binding site" evidence="1">
    <location>
        <position position="57"/>
    </location>
    <ligand>
        <name>S-adenosyl-L-methionine</name>
        <dbReference type="ChEBI" id="CHEBI:59789"/>
    </ligand>
</feature>
<feature type="binding site" evidence="1">
    <location>
        <position position="59"/>
    </location>
    <ligand>
        <name>S-adenosyl-L-methionine</name>
        <dbReference type="ChEBI" id="CHEBI:59789"/>
    </ligand>
</feature>
<feature type="binding site" evidence="1">
    <location>
        <position position="77"/>
    </location>
    <ligand>
        <name>S-adenosyl-L-methionine</name>
        <dbReference type="ChEBI" id="CHEBI:59789"/>
    </ligand>
</feature>
<feature type="binding site" evidence="1">
    <location>
        <position position="93"/>
    </location>
    <ligand>
        <name>S-adenosyl-L-methionine</name>
        <dbReference type="ChEBI" id="CHEBI:59789"/>
    </ligand>
</feature>
<feature type="binding site" evidence="1">
    <location>
        <position position="118"/>
    </location>
    <ligand>
        <name>S-adenosyl-L-methionine</name>
        <dbReference type="ChEBI" id="CHEBI:59789"/>
    </ligand>
</feature>
<feature type="modified residue" description="Phosphoserine" evidence="3">
    <location>
        <position position="362"/>
    </location>
</feature>
<feature type="helix" evidence="5">
    <location>
        <begin position="15"/>
        <end position="23"/>
    </location>
</feature>
<feature type="helix" evidence="5">
    <location>
        <begin position="28"/>
        <end position="40"/>
    </location>
</feature>
<feature type="strand" evidence="5">
    <location>
        <begin position="47"/>
        <end position="53"/>
    </location>
</feature>
<feature type="helix" evidence="5">
    <location>
        <begin position="58"/>
        <end position="66"/>
    </location>
</feature>
<feature type="strand" evidence="5">
    <location>
        <begin position="71"/>
        <end position="79"/>
    </location>
</feature>
<feature type="strand" evidence="5">
    <location>
        <begin position="87"/>
        <end position="92"/>
    </location>
</feature>
<feature type="helix" evidence="5">
    <location>
        <begin position="97"/>
        <end position="107"/>
    </location>
</feature>
<feature type="strand" evidence="5">
    <location>
        <begin position="112"/>
        <end position="117"/>
    </location>
</feature>
<feature type="helix" evidence="5">
    <location>
        <begin position="127"/>
        <end position="148"/>
    </location>
</feature>
<feature type="strand" evidence="5">
    <location>
        <begin position="149"/>
        <end position="160"/>
    </location>
</feature>
<feature type="helix" evidence="5">
    <location>
        <begin position="165"/>
        <end position="175"/>
    </location>
</feature>
<feature type="strand" evidence="5">
    <location>
        <begin position="176"/>
        <end position="179"/>
    </location>
</feature>
<feature type="strand" evidence="5">
    <location>
        <begin position="185"/>
        <end position="187"/>
    </location>
</feature>
<feature type="strand" evidence="5">
    <location>
        <begin position="193"/>
        <end position="201"/>
    </location>
</feature>
<feature type="helix" evidence="5">
    <location>
        <begin position="209"/>
        <end position="212"/>
    </location>
</feature>
<feature type="helix" evidence="5">
    <location>
        <begin position="214"/>
        <end position="217"/>
    </location>
</feature>
<feature type="helix" evidence="5">
    <location>
        <begin position="228"/>
        <end position="233"/>
    </location>
</feature>
<feature type="turn" evidence="5">
    <location>
        <begin position="246"/>
        <end position="248"/>
    </location>
</feature>
<feature type="strand" evidence="5">
    <location>
        <begin position="255"/>
        <end position="257"/>
    </location>
</feature>
<feature type="helix" evidence="5">
    <location>
        <begin position="258"/>
        <end position="263"/>
    </location>
</feature>
<feature type="helix" evidence="5">
    <location>
        <begin position="267"/>
        <end position="273"/>
    </location>
</feature>
<feature type="strand" evidence="5">
    <location>
        <begin position="275"/>
        <end position="278"/>
    </location>
</feature>
<feature type="strand" evidence="5">
    <location>
        <begin position="281"/>
        <end position="283"/>
    </location>
</feature>
<feature type="helix" evidence="5">
    <location>
        <begin position="284"/>
        <end position="291"/>
    </location>
</feature>
<feature type="strand" evidence="5">
    <location>
        <begin position="293"/>
        <end position="295"/>
    </location>
</feature>
<feature type="helix" evidence="5">
    <location>
        <begin position="297"/>
        <end position="304"/>
    </location>
</feature>
<feature type="strand" evidence="5">
    <location>
        <begin position="305"/>
        <end position="308"/>
    </location>
</feature>
<feature type="helix" evidence="5">
    <location>
        <begin position="311"/>
        <end position="328"/>
    </location>
</feature>
<feature type="helix" evidence="5">
    <location>
        <begin position="456"/>
        <end position="470"/>
    </location>
</feature>
<feature type="turn" evidence="5">
    <location>
        <begin position="471"/>
        <end position="474"/>
    </location>
</feature>
<feature type="helix" evidence="5">
    <location>
        <begin position="640"/>
        <end position="645"/>
    </location>
</feature>
<feature type="turn" evidence="5">
    <location>
        <begin position="650"/>
        <end position="653"/>
    </location>
</feature>
<feature type="helix" evidence="5">
    <location>
        <begin position="661"/>
        <end position="669"/>
    </location>
</feature>
<feature type="strand" evidence="5">
    <location>
        <begin position="757"/>
        <end position="760"/>
    </location>
</feature>
<feature type="helix" evidence="5">
    <location>
        <begin position="763"/>
        <end position="765"/>
    </location>
</feature>
<feature type="strand" evidence="5">
    <location>
        <begin position="769"/>
        <end position="771"/>
    </location>
</feature>
<feature type="strand" evidence="5">
    <location>
        <begin position="777"/>
        <end position="782"/>
    </location>
</feature>
<feature type="helix" evidence="5">
    <location>
        <begin position="787"/>
        <end position="795"/>
    </location>
</feature>
<protein>
    <recommendedName>
        <fullName evidence="1">AdoMet-dependent rRNA methyltransferase spb1</fullName>
        <ecNumber evidence="1">2.1.1.-</ecNumber>
    </recommendedName>
    <alternativeName>
        <fullName evidence="1">2'-O-ribose RNA methyltransferase</fullName>
    </alternativeName>
    <alternativeName>
        <fullName evidence="1">S-adenosyl-L-methionine-dependent methyltransferase</fullName>
    </alternativeName>
</protein>
<sequence length="802" mass="90906">MGKSQKKTAKGRLDKWYKLAKEQGYRSRAAFKLVQLNQKYSFLEKAKVIIDLCAAPGGWLQVASKTCKPGSLIVGVDLAPIKPIPNCHTFVEDITSDKCRSQLRGYLKTWKADVVLHDGAPNVGSAWLQDAYGQAQLVLMSMKLACEFLVAGGTFVTKVFRSRDYNNLLWVFKQLFNKVEATKPPSSRNVSAEIFVVCRGYKAPKKLDPRFTDPRTVFEEVQEPVTNVDAKVFHPEKRKRSREGYADDDYTLHKTVLASEFVTANDPIQILGTSAEIVFPKDDEECQRLYNLDVTTEEILLCCSDLQVLGKKEFRDILRWRLKIRDEMGIGKKVEDEQKTVVEEIPEMDEEERLDQELQDLSEAERVKLKRERRKANQRKQREIVRMQMGMLAPMDIGLEHEAMGEDSLFGLATAEKHGLKELENGTLPVTESVDEEVSTDNEVEYDSDDERDRLEADLDSMYSDYTKRKAESDVKYRVKKARGDLDDEEWNGIDNGTESDDSQIAETNFATPDKDRLTTSLLDKGSTKDGLSRKARMFFDQDIFDGIEDADADVEIMSMNRAAIKKREAELASQNNDDGSKGDQSEDSNDHIEVVPVASAHDEDDDWNSDSDNDENNVEIVTAEAMTLAQDIASRRKSKADLIDEGYNRWSFQSKEGLPDWFLDEETTVNKPNKPITKEAVLALREKMKALNARPIKKVLEAQGRKKMRTIKRLQRVAKKAEGISESGDMTESEKAKEISRLVSRATKSKPKAKPTLVVAKGPNKGLKSRPKGVKGKYKMVDSRMKKDLRAQKRLAKKGRR</sequence>
<gene>
    <name type="primary">spb1</name>
    <name type="synonym">pmt2</name>
    <name type="ORF">SPAC1687.11</name>
</gene>